<comment type="similarity">
    <text evidence="2">Belongs to the PRAME family.</text>
</comment>
<comment type="sequence caution" evidence="2">
    <conflict type="erroneous initiation">
        <sequence resource="EMBL-CDS" id="CAB41253"/>
    </conflict>
    <text>Extended N-terminus.</text>
</comment>
<proteinExistence type="evidence at transcript level"/>
<keyword id="KW-0433">Leucine-rich repeat</keyword>
<keyword id="KW-1185">Reference proteome</keyword>
<keyword id="KW-0677">Repeat</keyword>
<reference key="1">
    <citation type="journal article" date="2006" name="Nature">
        <title>The DNA sequence and biological annotation of human chromosome 1.</title>
        <authorList>
            <person name="Gregory S.G."/>
            <person name="Barlow K.F."/>
            <person name="McLay K.E."/>
            <person name="Kaul R."/>
            <person name="Swarbreck D."/>
            <person name="Dunham A."/>
            <person name="Scott C.E."/>
            <person name="Howe K.L."/>
            <person name="Woodfine K."/>
            <person name="Spencer C.C.A."/>
            <person name="Jones M.C."/>
            <person name="Gillson C."/>
            <person name="Searle S."/>
            <person name="Zhou Y."/>
            <person name="Kokocinski F."/>
            <person name="McDonald L."/>
            <person name="Evans R."/>
            <person name="Phillips K."/>
            <person name="Atkinson A."/>
            <person name="Cooper R."/>
            <person name="Jones C."/>
            <person name="Hall R.E."/>
            <person name="Andrews T.D."/>
            <person name="Lloyd C."/>
            <person name="Ainscough R."/>
            <person name="Almeida J.P."/>
            <person name="Ambrose K.D."/>
            <person name="Anderson F."/>
            <person name="Andrew R.W."/>
            <person name="Ashwell R.I.S."/>
            <person name="Aubin K."/>
            <person name="Babbage A.K."/>
            <person name="Bagguley C.L."/>
            <person name="Bailey J."/>
            <person name="Beasley H."/>
            <person name="Bethel G."/>
            <person name="Bird C.P."/>
            <person name="Bray-Allen S."/>
            <person name="Brown J.Y."/>
            <person name="Brown A.J."/>
            <person name="Buckley D."/>
            <person name="Burton J."/>
            <person name="Bye J."/>
            <person name="Carder C."/>
            <person name="Chapman J.C."/>
            <person name="Clark S.Y."/>
            <person name="Clarke G."/>
            <person name="Clee C."/>
            <person name="Cobley V."/>
            <person name="Collier R.E."/>
            <person name="Corby N."/>
            <person name="Coville G.J."/>
            <person name="Davies J."/>
            <person name="Deadman R."/>
            <person name="Dunn M."/>
            <person name="Earthrowl M."/>
            <person name="Ellington A.G."/>
            <person name="Errington H."/>
            <person name="Frankish A."/>
            <person name="Frankland J."/>
            <person name="French L."/>
            <person name="Garner P."/>
            <person name="Garnett J."/>
            <person name="Gay L."/>
            <person name="Ghori M.R.J."/>
            <person name="Gibson R."/>
            <person name="Gilby L.M."/>
            <person name="Gillett W."/>
            <person name="Glithero R.J."/>
            <person name="Grafham D.V."/>
            <person name="Griffiths C."/>
            <person name="Griffiths-Jones S."/>
            <person name="Grocock R."/>
            <person name="Hammond S."/>
            <person name="Harrison E.S.I."/>
            <person name="Hart E."/>
            <person name="Haugen E."/>
            <person name="Heath P.D."/>
            <person name="Holmes S."/>
            <person name="Holt K."/>
            <person name="Howden P.J."/>
            <person name="Hunt A.R."/>
            <person name="Hunt S.E."/>
            <person name="Hunter G."/>
            <person name="Isherwood J."/>
            <person name="James R."/>
            <person name="Johnson C."/>
            <person name="Johnson D."/>
            <person name="Joy A."/>
            <person name="Kay M."/>
            <person name="Kershaw J.K."/>
            <person name="Kibukawa M."/>
            <person name="Kimberley A.M."/>
            <person name="King A."/>
            <person name="Knights A.J."/>
            <person name="Lad H."/>
            <person name="Laird G."/>
            <person name="Lawlor S."/>
            <person name="Leongamornlert D.A."/>
            <person name="Lloyd D.M."/>
            <person name="Loveland J."/>
            <person name="Lovell J."/>
            <person name="Lush M.J."/>
            <person name="Lyne R."/>
            <person name="Martin S."/>
            <person name="Mashreghi-Mohammadi M."/>
            <person name="Matthews L."/>
            <person name="Matthews N.S.W."/>
            <person name="McLaren S."/>
            <person name="Milne S."/>
            <person name="Mistry S."/>
            <person name="Moore M.J.F."/>
            <person name="Nickerson T."/>
            <person name="O'Dell C.N."/>
            <person name="Oliver K."/>
            <person name="Palmeiri A."/>
            <person name="Palmer S.A."/>
            <person name="Parker A."/>
            <person name="Patel D."/>
            <person name="Pearce A.V."/>
            <person name="Peck A.I."/>
            <person name="Pelan S."/>
            <person name="Phelps K."/>
            <person name="Phillimore B.J."/>
            <person name="Plumb R."/>
            <person name="Rajan J."/>
            <person name="Raymond C."/>
            <person name="Rouse G."/>
            <person name="Saenphimmachak C."/>
            <person name="Sehra H.K."/>
            <person name="Sheridan E."/>
            <person name="Shownkeen R."/>
            <person name="Sims S."/>
            <person name="Skuce C.D."/>
            <person name="Smith M."/>
            <person name="Steward C."/>
            <person name="Subramanian S."/>
            <person name="Sycamore N."/>
            <person name="Tracey A."/>
            <person name="Tromans A."/>
            <person name="Van Helmond Z."/>
            <person name="Wall M."/>
            <person name="Wallis J.M."/>
            <person name="White S."/>
            <person name="Whitehead S.L."/>
            <person name="Wilkinson J.E."/>
            <person name="Willey D.L."/>
            <person name="Williams H."/>
            <person name="Wilming L."/>
            <person name="Wray P.W."/>
            <person name="Wu Z."/>
            <person name="Coulson A."/>
            <person name="Vaudin M."/>
            <person name="Sulston J.E."/>
            <person name="Durbin R.M."/>
            <person name="Hubbard T."/>
            <person name="Wooster R."/>
            <person name="Dunham I."/>
            <person name="Carter N.P."/>
            <person name="McVean G."/>
            <person name="Ross M.T."/>
            <person name="Harrow J."/>
            <person name="Olson M.V."/>
            <person name="Beck S."/>
            <person name="Rogers J."/>
            <person name="Bentley D.R."/>
        </authorList>
    </citation>
    <scope>NUCLEOTIDE SEQUENCE [LARGE SCALE GENOMIC DNA]</scope>
</reference>
<reference key="2">
    <citation type="submission" date="1999-04" db="EMBL/GenBank/DDBJ databases">
        <authorList>
            <person name="Rhodes S."/>
        </authorList>
    </citation>
    <scope>NUCLEOTIDE SEQUENCE [LARGE SCALE MRNA] OF 1-477</scope>
</reference>
<organism>
    <name type="scientific">Homo sapiens</name>
    <name type="common">Human</name>
    <dbReference type="NCBI Taxonomy" id="9606"/>
    <lineage>
        <taxon>Eukaryota</taxon>
        <taxon>Metazoa</taxon>
        <taxon>Chordata</taxon>
        <taxon>Craniata</taxon>
        <taxon>Vertebrata</taxon>
        <taxon>Euteleostomi</taxon>
        <taxon>Mammalia</taxon>
        <taxon>Eutheria</taxon>
        <taxon>Euarchontoglires</taxon>
        <taxon>Primates</taxon>
        <taxon>Haplorrhini</taxon>
        <taxon>Catarrhini</taxon>
        <taxon>Hominidae</taxon>
        <taxon>Homo</taxon>
    </lineage>
</organism>
<sequence length="478" mass="55439">MKMSIWTPPRLLELAGRSLLRDQALAMSTLEELPTELFPPLFMEAFSRRRCEALKLMVQSWPFRRLPLRPLIKMPCLEAFQAVLDGLDALLNLGVRPRRWKLQVLDLQDVCENFWMVWSEAMAHGCFLNAKRNKKPVEDCPRMKGRQPLTVFVELWLKNRTLDEYLTCLLLWVKQRKDLLHLCCKKLKILGMPFRNIRSILKMVNLDCIQEVEVNCKWVLPILTQFTPYLGHMRNLQKLILSHMDVSRYVSPEQKKEIVTQFTTQFLKLRCLQKLYMNSVSFLEGHLDQLLSCLKTSLKFLTITNCVLLESDLKHLSQCPSISQLKTLDLSGIRLTNYSLVPLQILLEKVAATLEYLDLDDCGIIDSQVNAILPALSRCFELNTFSFCGNPICMATLENLLSHTIILKNLCVELYPAPRESYGADGTLCWSRFAQIRAELMNRVRDLRHPKRILFCTDYCPDCGNRSFYDLEADQYCC</sequence>
<protein>
    <recommendedName>
        <fullName evidence="3">PRAME family member 4</fullName>
    </recommendedName>
</protein>
<feature type="chain" id="PRO_0000156978" description="PRAME family member 4">
    <location>
        <begin position="1"/>
        <end position="478"/>
    </location>
</feature>
<feature type="repeat" description="LRR 1; degenerate" evidence="1">
    <location>
        <begin position="99"/>
        <end position="126"/>
    </location>
</feature>
<feature type="repeat" description="LRR 2; degenerate" evidence="1">
    <location>
        <begin position="181"/>
        <end position="205"/>
    </location>
</feature>
<feature type="repeat" description="LRR 3; degenerate" evidence="1">
    <location>
        <begin position="206"/>
        <end position="232"/>
    </location>
</feature>
<feature type="repeat" description="LRR 4; degenerate" evidence="1">
    <location>
        <begin position="233"/>
        <end position="268"/>
    </location>
</feature>
<feature type="repeat" description="LRR 5" evidence="1">
    <location>
        <begin position="269"/>
        <end position="294"/>
    </location>
</feature>
<feature type="repeat" description="LRR 6" evidence="1">
    <location>
        <begin position="295"/>
        <end position="326"/>
    </location>
</feature>
<feature type="repeat" description="LRR 7" evidence="1">
    <location>
        <begin position="327"/>
        <end position="347"/>
    </location>
</feature>
<feature type="repeat" description="LRR 8" evidence="1">
    <location>
        <begin position="351"/>
        <end position="378"/>
    </location>
</feature>
<feature type="repeat" description="LRR 9" evidence="1">
    <location>
        <begin position="379"/>
        <end position="403"/>
    </location>
</feature>
<feature type="sequence variant" id="VAR_053607" description="In dbSNP:rs4625290.">
    <original>D</original>
    <variation>E</variation>
    <location>
        <position position="85"/>
    </location>
</feature>
<feature type="sequence conflict" description="In Ref. 2; CAB41253." evidence="2" ref="2">
    <original>K</original>
    <variation>R</variation>
    <location>
        <position position="144"/>
    </location>
</feature>
<gene>
    <name evidence="3" type="primary">PRAMEF4</name>
</gene>
<dbReference type="EMBL" id="AC245034">
    <property type="status" value="NOT_ANNOTATED_CDS"/>
    <property type="molecule type" value="Genomic_DNA"/>
</dbReference>
<dbReference type="EMBL" id="AL022101">
    <property type="status" value="NOT_ANNOTATED_CDS"/>
    <property type="molecule type" value="Genomic_DNA"/>
</dbReference>
<dbReference type="EMBL" id="AL049681">
    <property type="protein sequence ID" value="CAB41253.1"/>
    <property type="status" value="ALT_INIT"/>
    <property type="molecule type" value="mRNA"/>
</dbReference>
<dbReference type="CCDS" id="CCDS30592.1"/>
<dbReference type="RefSeq" id="NP_001009611.2">
    <property type="nucleotide sequence ID" value="NM_001009611.4"/>
</dbReference>
<dbReference type="FunCoup" id="O60810">
    <property type="interactions" value="23"/>
</dbReference>
<dbReference type="IntAct" id="O60810">
    <property type="interactions" value="3"/>
</dbReference>
<dbReference type="MINT" id="O60810"/>
<dbReference type="STRING" id="9606.ENSP00000235349"/>
<dbReference type="iPTMnet" id="O60810"/>
<dbReference type="PhosphoSitePlus" id="O60810"/>
<dbReference type="SwissPalm" id="O60810"/>
<dbReference type="BioMuta" id="PRAMEF4"/>
<dbReference type="jPOST" id="O60810"/>
<dbReference type="MassIVE" id="O60810"/>
<dbReference type="PaxDb" id="9606-ENSP00000235349"/>
<dbReference type="PeptideAtlas" id="O60810"/>
<dbReference type="ProteomicsDB" id="49603"/>
<dbReference type="DNASU" id="400735"/>
<dbReference type="Ensembl" id="ENST00000235349.6">
    <property type="protein sequence ID" value="ENSP00000235349.5"/>
    <property type="gene ID" value="ENSG00000243073.4"/>
</dbReference>
<dbReference type="Ensembl" id="ENST00000632563.2">
    <property type="protein sequence ID" value="ENSP00000488161.1"/>
    <property type="gene ID" value="ENSG00000282584.2"/>
</dbReference>
<dbReference type="GeneID" id="400735"/>
<dbReference type="KEGG" id="hsa:400735"/>
<dbReference type="MANE-Select" id="ENST00000235349.6">
    <property type="protein sequence ID" value="ENSP00000235349.5"/>
    <property type="RefSeq nucleotide sequence ID" value="NM_001009611.4"/>
    <property type="RefSeq protein sequence ID" value="NP_001009611.2"/>
</dbReference>
<dbReference type="UCSC" id="uc001aun.3">
    <property type="organism name" value="human"/>
</dbReference>
<dbReference type="AGR" id="HGNC:31971"/>
<dbReference type="CTD" id="400735"/>
<dbReference type="GeneCards" id="PRAMEF4"/>
<dbReference type="HGNC" id="HGNC:31971">
    <property type="gene designation" value="PRAMEF4"/>
</dbReference>
<dbReference type="HPA" id="ENSG00000243073">
    <property type="expression patterns" value="Not detected"/>
</dbReference>
<dbReference type="neXtProt" id="NX_O60810"/>
<dbReference type="OpenTargets" id="ENSG00000243073"/>
<dbReference type="PharmGKB" id="PA142671141"/>
<dbReference type="VEuPathDB" id="HostDB:ENSG00000243073"/>
<dbReference type="eggNOG" id="ENOG502QWSJ">
    <property type="taxonomic scope" value="Eukaryota"/>
</dbReference>
<dbReference type="GeneTree" id="ENSGT01030000234531"/>
<dbReference type="HOGENOM" id="CLU_039635_2_1_1"/>
<dbReference type="InParanoid" id="O60810"/>
<dbReference type="OMA" id="LESEGXV"/>
<dbReference type="OrthoDB" id="9915at9604"/>
<dbReference type="PAN-GO" id="O60810">
    <property type="GO annotations" value="1 GO annotation based on evolutionary models"/>
</dbReference>
<dbReference type="TreeFam" id="TF332708"/>
<dbReference type="PathwayCommons" id="O60810"/>
<dbReference type="BioGRID-ORCS" id="400735">
    <property type="hits" value="10 hits in 1030 CRISPR screens"/>
</dbReference>
<dbReference type="ChiTaRS" id="PRAMEF4">
    <property type="organism name" value="human"/>
</dbReference>
<dbReference type="GenomeRNAi" id="400735"/>
<dbReference type="Pharos" id="O60810">
    <property type="development level" value="Tdark"/>
</dbReference>
<dbReference type="PRO" id="PR:O60810"/>
<dbReference type="Proteomes" id="UP000005640">
    <property type="component" value="Chromosome 1"/>
</dbReference>
<dbReference type="RNAct" id="O60810">
    <property type="molecule type" value="protein"/>
</dbReference>
<dbReference type="Bgee" id="ENSG00000243073">
    <property type="expression patterns" value="Expressed in blood"/>
</dbReference>
<dbReference type="GO" id="GO:0031462">
    <property type="term" value="C:Cul2-RING ubiquitin ligase complex"/>
    <property type="evidence" value="ECO:0000318"/>
    <property type="project" value="GO_Central"/>
</dbReference>
<dbReference type="GO" id="GO:0005737">
    <property type="term" value="C:cytoplasm"/>
    <property type="evidence" value="ECO:0000318"/>
    <property type="project" value="GO_Central"/>
</dbReference>
<dbReference type="GO" id="GO:1990756">
    <property type="term" value="F:ubiquitin-like ligase-substrate adaptor activity"/>
    <property type="evidence" value="ECO:0000318"/>
    <property type="project" value="GO_Central"/>
</dbReference>
<dbReference type="GO" id="GO:0043066">
    <property type="term" value="P:negative regulation of apoptotic process"/>
    <property type="evidence" value="ECO:0007669"/>
    <property type="project" value="InterPro"/>
</dbReference>
<dbReference type="GO" id="GO:0045596">
    <property type="term" value="P:negative regulation of cell differentiation"/>
    <property type="evidence" value="ECO:0007669"/>
    <property type="project" value="InterPro"/>
</dbReference>
<dbReference type="GO" id="GO:0045892">
    <property type="term" value="P:negative regulation of DNA-templated transcription"/>
    <property type="evidence" value="ECO:0007669"/>
    <property type="project" value="InterPro"/>
</dbReference>
<dbReference type="GO" id="GO:0008284">
    <property type="term" value="P:positive regulation of cell population proliferation"/>
    <property type="evidence" value="ECO:0007669"/>
    <property type="project" value="InterPro"/>
</dbReference>
<dbReference type="GO" id="GO:0043161">
    <property type="term" value="P:proteasome-mediated ubiquitin-dependent protein catabolic process"/>
    <property type="evidence" value="ECO:0000318"/>
    <property type="project" value="GO_Central"/>
</dbReference>
<dbReference type="FunFam" id="3.80.10.10:FF:000079">
    <property type="entry name" value="PRAME family member 18"/>
    <property type="match status" value="1"/>
</dbReference>
<dbReference type="Gene3D" id="3.80.10.10">
    <property type="entry name" value="Ribonuclease Inhibitor"/>
    <property type="match status" value="1"/>
</dbReference>
<dbReference type="InterPro" id="IPR032675">
    <property type="entry name" value="LRR_dom_sf"/>
</dbReference>
<dbReference type="InterPro" id="IPR026271">
    <property type="entry name" value="PRAME"/>
</dbReference>
<dbReference type="InterPro" id="IPR050694">
    <property type="entry name" value="PRAME_domain"/>
</dbReference>
<dbReference type="PANTHER" id="PTHR14224:SF19">
    <property type="entry name" value="PRAME FAMILY MEMBER 11-RELATED"/>
    <property type="match status" value="1"/>
</dbReference>
<dbReference type="PANTHER" id="PTHR14224">
    <property type="entry name" value="SIMILAR TO PREFERENTIALLY EXPRESSED ANTIGEN IN MELANOMA-LIKE 3"/>
    <property type="match status" value="1"/>
</dbReference>
<dbReference type="PIRSF" id="PIRSF038286">
    <property type="entry name" value="PRAME"/>
    <property type="match status" value="1"/>
</dbReference>
<dbReference type="SUPFAM" id="SSF52047">
    <property type="entry name" value="RNI-like"/>
    <property type="match status" value="1"/>
</dbReference>
<evidence type="ECO:0000250" key="1">
    <source>
        <dbReference type="UniProtKB" id="Q3UWY1"/>
    </source>
</evidence>
<evidence type="ECO:0000305" key="2"/>
<evidence type="ECO:0000312" key="3">
    <source>
        <dbReference type="HGNC" id="HGNC:31971"/>
    </source>
</evidence>
<accession>O60810</accession>
<accession>Q5LJB5</accession>
<name>PRAM4_HUMAN</name>